<sequence length="360" mass="38745">MLMFLTHFAEHVTPFNVFRYITFRTGGAMITSALIVFLFGPTIINSLRVRQGKGQPIRADGPQTHFKKAGTPTMGGLMIMTGILASCLLWANLASVYVWVVLMVSVGFGAIGFYDDYLKVTKQSDKGFSGKARLGIEFLIAAIAAFTIMRAGQEPFSSSLTFPFVKQLVINLSWFFIPFAAFVMVGAGNAVNLTDGLDGLAIVPVMVAAASFGFIAYLSGNAIFADYLQIHFVPGTGELAVVLGAVIGAGLGFLWFNAPPAAIFMGDTGSLALGGMLGTVAVATKHEIVLAIIGGLFVMEALSVIIQVGFFKMTGRRVFLMAPIHHHFEKKGWTESQVVIRFWIVAIILAMIGLSTLKLR</sequence>
<organism>
    <name type="scientific">Brucella melitensis biotype 2 (strain ATCC 23457)</name>
    <dbReference type="NCBI Taxonomy" id="546272"/>
    <lineage>
        <taxon>Bacteria</taxon>
        <taxon>Pseudomonadati</taxon>
        <taxon>Pseudomonadota</taxon>
        <taxon>Alphaproteobacteria</taxon>
        <taxon>Hyphomicrobiales</taxon>
        <taxon>Brucellaceae</taxon>
        <taxon>Brucella/Ochrobactrum group</taxon>
        <taxon>Brucella</taxon>
    </lineage>
</organism>
<dbReference type="EC" id="2.7.8.13" evidence="1"/>
<dbReference type="EMBL" id="CP001488">
    <property type="protein sequence ID" value="ACO01195.1"/>
    <property type="molecule type" value="Genomic_DNA"/>
</dbReference>
<dbReference type="RefSeq" id="WP_002964542.1">
    <property type="nucleotide sequence ID" value="NC_012441.1"/>
</dbReference>
<dbReference type="SMR" id="C0RE73"/>
<dbReference type="GeneID" id="93016268"/>
<dbReference type="KEGG" id="bmi:BMEA_A1482"/>
<dbReference type="HOGENOM" id="CLU_023982_0_0_5"/>
<dbReference type="UniPathway" id="UPA00219"/>
<dbReference type="Proteomes" id="UP000001748">
    <property type="component" value="Chromosome I"/>
</dbReference>
<dbReference type="GO" id="GO:0005886">
    <property type="term" value="C:plasma membrane"/>
    <property type="evidence" value="ECO:0007669"/>
    <property type="project" value="UniProtKB-SubCell"/>
</dbReference>
<dbReference type="GO" id="GO:0046872">
    <property type="term" value="F:metal ion binding"/>
    <property type="evidence" value="ECO:0007669"/>
    <property type="project" value="UniProtKB-KW"/>
</dbReference>
<dbReference type="GO" id="GO:0008963">
    <property type="term" value="F:phospho-N-acetylmuramoyl-pentapeptide-transferase activity"/>
    <property type="evidence" value="ECO:0007669"/>
    <property type="project" value="UniProtKB-UniRule"/>
</dbReference>
<dbReference type="GO" id="GO:0051992">
    <property type="term" value="F:UDP-N-acetylmuramoyl-L-alanyl-D-glutamyl-meso-2,6-diaminopimelyl-D-alanyl-D-alanine:undecaprenyl-phosphate transferase activity"/>
    <property type="evidence" value="ECO:0007669"/>
    <property type="project" value="RHEA"/>
</dbReference>
<dbReference type="GO" id="GO:0051301">
    <property type="term" value="P:cell division"/>
    <property type="evidence" value="ECO:0007669"/>
    <property type="project" value="UniProtKB-KW"/>
</dbReference>
<dbReference type="GO" id="GO:0071555">
    <property type="term" value="P:cell wall organization"/>
    <property type="evidence" value="ECO:0007669"/>
    <property type="project" value="UniProtKB-KW"/>
</dbReference>
<dbReference type="GO" id="GO:0009252">
    <property type="term" value="P:peptidoglycan biosynthetic process"/>
    <property type="evidence" value="ECO:0007669"/>
    <property type="project" value="UniProtKB-UniRule"/>
</dbReference>
<dbReference type="GO" id="GO:0008360">
    <property type="term" value="P:regulation of cell shape"/>
    <property type="evidence" value="ECO:0007669"/>
    <property type="project" value="UniProtKB-KW"/>
</dbReference>
<dbReference type="CDD" id="cd06852">
    <property type="entry name" value="GT_MraY"/>
    <property type="match status" value="1"/>
</dbReference>
<dbReference type="HAMAP" id="MF_00038">
    <property type="entry name" value="MraY"/>
    <property type="match status" value="1"/>
</dbReference>
<dbReference type="InterPro" id="IPR000715">
    <property type="entry name" value="Glycosyl_transferase_4"/>
</dbReference>
<dbReference type="InterPro" id="IPR003524">
    <property type="entry name" value="PNAcMuramoyl-5peptid_Trfase"/>
</dbReference>
<dbReference type="InterPro" id="IPR018480">
    <property type="entry name" value="PNAcMuramoyl-5peptid_Trfase_CS"/>
</dbReference>
<dbReference type="NCBIfam" id="TIGR00445">
    <property type="entry name" value="mraY"/>
    <property type="match status" value="1"/>
</dbReference>
<dbReference type="PANTHER" id="PTHR22926">
    <property type="entry name" value="PHOSPHO-N-ACETYLMURAMOYL-PENTAPEPTIDE-TRANSFERASE"/>
    <property type="match status" value="1"/>
</dbReference>
<dbReference type="PANTHER" id="PTHR22926:SF5">
    <property type="entry name" value="PHOSPHO-N-ACETYLMURAMOYL-PENTAPEPTIDE-TRANSFERASE HOMOLOG"/>
    <property type="match status" value="1"/>
</dbReference>
<dbReference type="Pfam" id="PF00953">
    <property type="entry name" value="Glycos_transf_4"/>
    <property type="match status" value="1"/>
</dbReference>
<dbReference type="Pfam" id="PF10555">
    <property type="entry name" value="MraY_sig1"/>
    <property type="match status" value="1"/>
</dbReference>
<dbReference type="PROSITE" id="PS01347">
    <property type="entry name" value="MRAY_1"/>
    <property type="match status" value="1"/>
</dbReference>
<dbReference type="PROSITE" id="PS01348">
    <property type="entry name" value="MRAY_2"/>
    <property type="match status" value="1"/>
</dbReference>
<gene>
    <name evidence="1" type="primary">mraY</name>
    <name type="ordered locus">BMEA_A1482</name>
</gene>
<protein>
    <recommendedName>
        <fullName evidence="1">Phospho-N-acetylmuramoyl-pentapeptide-transferase</fullName>
        <ecNumber evidence="1">2.7.8.13</ecNumber>
    </recommendedName>
    <alternativeName>
        <fullName evidence="1">UDP-MurNAc-pentapeptide phosphotransferase</fullName>
    </alternativeName>
</protein>
<feature type="chain" id="PRO_1000117167" description="Phospho-N-acetylmuramoyl-pentapeptide-transferase">
    <location>
        <begin position="1"/>
        <end position="360"/>
    </location>
</feature>
<feature type="transmembrane region" description="Helical" evidence="1">
    <location>
        <begin position="27"/>
        <end position="47"/>
    </location>
</feature>
<feature type="transmembrane region" description="Helical" evidence="1">
    <location>
        <begin position="71"/>
        <end position="91"/>
    </location>
</feature>
<feature type="transmembrane region" description="Helical" evidence="1">
    <location>
        <begin position="93"/>
        <end position="113"/>
    </location>
</feature>
<feature type="transmembrane region" description="Helical" evidence="1">
    <location>
        <begin position="128"/>
        <end position="148"/>
    </location>
</feature>
<feature type="transmembrane region" description="Helical" evidence="1">
    <location>
        <begin position="168"/>
        <end position="188"/>
    </location>
</feature>
<feature type="transmembrane region" description="Helical" evidence="1">
    <location>
        <begin position="199"/>
        <end position="219"/>
    </location>
</feature>
<feature type="transmembrane region" description="Helical" evidence="1">
    <location>
        <begin position="239"/>
        <end position="259"/>
    </location>
</feature>
<feature type="transmembrane region" description="Helical" evidence="1">
    <location>
        <begin position="262"/>
        <end position="282"/>
    </location>
</feature>
<feature type="transmembrane region" description="Helical" evidence="1">
    <location>
        <begin position="288"/>
        <end position="308"/>
    </location>
</feature>
<feature type="transmembrane region" description="Helical" evidence="1">
    <location>
        <begin position="337"/>
        <end position="357"/>
    </location>
</feature>
<keyword id="KW-0131">Cell cycle</keyword>
<keyword id="KW-0132">Cell division</keyword>
<keyword id="KW-0997">Cell inner membrane</keyword>
<keyword id="KW-1003">Cell membrane</keyword>
<keyword id="KW-0133">Cell shape</keyword>
<keyword id="KW-0961">Cell wall biogenesis/degradation</keyword>
<keyword id="KW-0460">Magnesium</keyword>
<keyword id="KW-0472">Membrane</keyword>
<keyword id="KW-0479">Metal-binding</keyword>
<keyword id="KW-0573">Peptidoglycan synthesis</keyword>
<keyword id="KW-0808">Transferase</keyword>
<keyword id="KW-0812">Transmembrane</keyword>
<keyword id="KW-1133">Transmembrane helix</keyword>
<reference key="1">
    <citation type="submission" date="2009-03" db="EMBL/GenBank/DDBJ databases">
        <title>Brucella melitensis ATCC 23457 whole genome shotgun sequencing project.</title>
        <authorList>
            <person name="Setubal J.C."/>
            <person name="Boyle S."/>
            <person name="Crasta O.R."/>
            <person name="Gillespie J.J."/>
            <person name="Kenyon R.W."/>
            <person name="Lu J."/>
            <person name="Mane S."/>
            <person name="Nagrani S."/>
            <person name="Shallom J.M."/>
            <person name="Shallom S."/>
            <person name="Shukla M."/>
            <person name="Snyder E.E."/>
            <person name="Sobral B.W."/>
            <person name="Wattam A.R."/>
            <person name="Will R."/>
            <person name="Williams K."/>
            <person name="Yoo H."/>
            <person name="Munk C."/>
            <person name="Tapia R."/>
            <person name="Han C."/>
            <person name="Detter J.C."/>
            <person name="Bruce D."/>
            <person name="Brettin T.S."/>
        </authorList>
    </citation>
    <scope>NUCLEOTIDE SEQUENCE [LARGE SCALE GENOMIC DNA]</scope>
    <source>
        <strain>ATCC 23457</strain>
    </source>
</reference>
<name>MRAY_BRUMB</name>
<evidence type="ECO:0000255" key="1">
    <source>
        <dbReference type="HAMAP-Rule" id="MF_00038"/>
    </source>
</evidence>
<comment type="function">
    <text evidence="1">Catalyzes the initial step of the lipid cycle reactions in the biosynthesis of the cell wall peptidoglycan: transfers peptidoglycan precursor phospho-MurNAc-pentapeptide from UDP-MurNAc-pentapeptide onto the lipid carrier undecaprenyl phosphate, yielding undecaprenyl-pyrophosphoryl-MurNAc-pentapeptide, known as lipid I.</text>
</comment>
<comment type="catalytic activity">
    <reaction evidence="1">
        <text>UDP-N-acetyl-alpha-D-muramoyl-L-alanyl-gamma-D-glutamyl-meso-2,6-diaminopimeloyl-D-alanyl-D-alanine + di-trans,octa-cis-undecaprenyl phosphate = di-trans,octa-cis-undecaprenyl diphospho-N-acetyl-alpha-D-muramoyl-L-alanyl-D-glutamyl-meso-2,6-diaminopimeloyl-D-alanyl-D-alanine + UMP</text>
        <dbReference type="Rhea" id="RHEA:28386"/>
        <dbReference type="ChEBI" id="CHEBI:57865"/>
        <dbReference type="ChEBI" id="CHEBI:60392"/>
        <dbReference type="ChEBI" id="CHEBI:61386"/>
        <dbReference type="ChEBI" id="CHEBI:61387"/>
        <dbReference type="EC" id="2.7.8.13"/>
    </reaction>
</comment>
<comment type="cofactor">
    <cofactor evidence="1">
        <name>Mg(2+)</name>
        <dbReference type="ChEBI" id="CHEBI:18420"/>
    </cofactor>
</comment>
<comment type="pathway">
    <text evidence="1">Cell wall biogenesis; peptidoglycan biosynthesis.</text>
</comment>
<comment type="subcellular location">
    <subcellularLocation>
        <location evidence="1">Cell inner membrane</location>
        <topology evidence="1">Multi-pass membrane protein</topology>
    </subcellularLocation>
</comment>
<comment type="similarity">
    <text evidence="1">Belongs to the glycosyltransferase 4 family. MraY subfamily.</text>
</comment>
<proteinExistence type="inferred from homology"/>
<accession>C0RE73</accession>